<accession>B3MFC2</accession>
<evidence type="ECO:0000250" key="1">
    <source>
        <dbReference type="UniProtKB" id="B5A5T4"/>
    </source>
</evidence>
<evidence type="ECO:0000255" key="2"/>
<evidence type="ECO:0000255" key="3">
    <source>
        <dbReference type="PROSITE-ProRule" id="PRU00498"/>
    </source>
</evidence>
<evidence type="ECO:0000305" key="4"/>
<evidence type="ECO:0000312" key="5">
    <source>
        <dbReference type="EMBL" id="EDV35596.1"/>
    </source>
</evidence>
<sequence length="159" mass="18346">MWTPRIAVNHWLLVTTAIFGFLTFIWIPQASAECQTRSIYCYECDSWTDARCKDPFNYTALPRDQPPLMTCNGCCVKMVRHQRSPYEVVRRMMCTSQLQINLFMVDHVCMMESSGNGHMCFCEEDMCNSSKDLHTNGCQLHLITIAVAMSWLMGQLLSR</sequence>
<keyword id="KW-0090">Biological rhythms</keyword>
<keyword id="KW-1003">Cell membrane</keyword>
<keyword id="KW-1015">Disulfide bond</keyword>
<keyword id="KW-0325">Glycoprotein</keyword>
<keyword id="KW-0336">GPI-anchor</keyword>
<keyword id="KW-0449">Lipoprotein</keyword>
<keyword id="KW-0472">Membrane</keyword>
<keyword id="KW-1185">Reference proteome</keyword>
<keyword id="KW-0732">Signal</keyword>
<keyword id="KW-0812">Transmembrane</keyword>
<keyword id="KW-1133">Transmembrane helix</keyword>
<proteinExistence type="inferred from homology"/>
<organism>
    <name type="scientific">Drosophila ananassae</name>
    <name type="common">Fruit fly</name>
    <dbReference type="NCBI Taxonomy" id="7217"/>
    <lineage>
        <taxon>Eukaryota</taxon>
        <taxon>Metazoa</taxon>
        <taxon>Ecdysozoa</taxon>
        <taxon>Arthropoda</taxon>
        <taxon>Hexapoda</taxon>
        <taxon>Insecta</taxon>
        <taxon>Pterygota</taxon>
        <taxon>Neoptera</taxon>
        <taxon>Endopterygota</taxon>
        <taxon>Diptera</taxon>
        <taxon>Brachycera</taxon>
        <taxon>Muscomorpha</taxon>
        <taxon>Ephydroidea</taxon>
        <taxon>Drosophilidae</taxon>
        <taxon>Drosophila</taxon>
        <taxon>Sophophora</taxon>
    </lineage>
</organism>
<reference evidence="5" key="1">
    <citation type="journal article" date="2007" name="Nature">
        <title>Evolution of genes and genomes on the Drosophila phylogeny.</title>
        <authorList>
            <consortium name="Drosophila 12 genomes consortium"/>
        </authorList>
    </citation>
    <scope>NUCLEOTIDE SEQUENCE [LARGE SCALE GENOMIC DNA]</scope>
    <source>
        <strain evidence="5">Tucson 14024-0371.13</strain>
    </source>
</reference>
<feature type="signal peptide" evidence="2">
    <location>
        <begin position="1"/>
        <end position="32"/>
    </location>
</feature>
<feature type="chain" id="PRO_0000365456" description="UPAR/Ly6 domain-containing protein qvr" evidence="2">
    <location>
        <begin position="33"/>
        <end position="128"/>
    </location>
</feature>
<feature type="propeptide" id="PRO_0000365457" description="Removed in mature form" evidence="1">
    <location>
        <begin position="129"/>
        <end position="159"/>
    </location>
</feature>
<feature type="transmembrane region" description="Helical" evidence="2">
    <location>
        <begin position="137"/>
        <end position="157"/>
    </location>
</feature>
<feature type="region of interest" description="Loop 1; may be required for cell surface localization or be essential for protein folding" evidence="1">
    <location>
        <begin position="54"/>
        <end position="67"/>
    </location>
</feature>
<feature type="region of interest" description="Loop 2; required for interaction with Sh/shaker and nAChRalpha3/Nicotinic acetylcholine receptor alpha3" evidence="1">
    <location>
        <begin position="77"/>
        <end position="91"/>
    </location>
</feature>
<feature type="lipid moiety-binding region" description="GPI-anchor amidated asparagine" evidence="1">
    <location>
        <position position="128"/>
    </location>
</feature>
<feature type="glycosylation site" description="N-linked (GlcNAc...) asparagine" evidence="1 3">
    <location>
        <position position="57"/>
    </location>
</feature>
<feature type="disulfide bond" evidence="1">
    <location>
        <begin position="41"/>
        <end position="75"/>
    </location>
</feature>
<feature type="disulfide bond" evidence="1">
    <location>
        <begin position="44"/>
        <end position="52"/>
    </location>
</feature>
<feature type="disulfide bond" evidence="1">
    <location>
        <begin position="71"/>
        <end position="94"/>
    </location>
</feature>
<feature type="disulfide bond" evidence="1">
    <location>
        <begin position="109"/>
        <end position="120"/>
    </location>
</feature>
<feature type="disulfide bond" evidence="1">
    <location>
        <begin position="122"/>
        <end position="127"/>
    </location>
</feature>
<dbReference type="EMBL" id="CH902619">
    <property type="protein sequence ID" value="EDV35596.1"/>
    <property type="status" value="ALT_SEQ"/>
    <property type="molecule type" value="Genomic_DNA"/>
</dbReference>
<dbReference type="RefSeq" id="XP_001958774.2">
    <property type="nucleotide sequence ID" value="XM_001958738.2"/>
</dbReference>
<dbReference type="FunCoup" id="B3MFC2">
    <property type="interactions" value="44"/>
</dbReference>
<dbReference type="STRING" id="7217.B3MFC2"/>
<dbReference type="GlyCosmos" id="B3MFC2">
    <property type="glycosylation" value="1 site, No reported glycans"/>
</dbReference>
<dbReference type="eggNOG" id="ENOG502S199">
    <property type="taxonomic scope" value="Eukaryota"/>
</dbReference>
<dbReference type="InParanoid" id="B3MFC2"/>
<dbReference type="OrthoDB" id="9991292at2759"/>
<dbReference type="ChiTaRS" id="qvr">
    <property type="organism name" value="fly"/>
</dbReference>
<dbReference type="Proteomes" id="UP000007801">
    <property type="component" value="Unassembled WGS sequence"/>
</dbReference>
<dbReference type="GO" id="GO:0009897">
    <property type="term" value="C:external side of plasma membrane"/>
    <property type="evidence" value="ECO:0007669"/>
    <property type="project" value="EnsemblMetazoa"/>
</dbReference>
<dbReference type="GO" id="GO:0045121">
    <property type="term" value="C:membrane raft"/>
    <property type="evidence" value="ECO:0007669"/>
    <property type="project" value="UniProtKB-SubCell"/>
</dbReference>
<dbReference type="GO" id="GO:0005886">
    <property type="term" value="C:plasma membrane"/>
    <property type="evidence" value="ECO:0000250"/>
    <property type="project" value="UniProtKB"/>
</dbReference>
<dbReference type="GO" id="GO:0030550">
    <property type="term" value="F:acetylcholine receptor inhibitor activity"/>
    <property type="evidence" value="ECO:0007669"/>
    <property type="project" value="EnsemblMetazoa"/>
</dbReference>
<dbReference type="GO" id="GO:0034235">
    <property type="term" value="F:GPI anchor binding"/>
    <property type="evidence" value="ECO:0000250"/>
    <property type="project" value="UniProtKB"/>
</dbReference>
<dbReference type="GO" id="GO:0099104">
    <property type="term" value="F:potassium channel activator activity"/>
    <property type="evidence" value="ECO:0007669"/>
    <property type="project" value="EnsemblMetazoa"/>
</dbReference>
<dbReference type="GO" id="GO:0045837">
    <property type="term" value="P:negative regulation of membrane potential"/>
    <property type="evidence" value="ECO:0007669"/>
    <property type="project" value="EnsemblMetazoa"/>
</dbReference>
<dbReference type="GO" id="GO:0045938">
    <property type="term" value="P:positive regulation of circadian sleep/wake cycle, sleep"/>
    <property type="evidence" value="ECO:0007669"/>
    <property type="project" value="EnsemblMetazoa"/>
</dbReference>
<dbReference type="GO" id="GO:0045187">
    <property type="term" value="P:regulation of circadian sleep/wake cycle, sleep"/>
    <property type="evidence" value="ECO:0000250"/>
    <property type="project" value="UniProtKB"/>
</dbReference>
<dbReference type="GO" id="GO:0032222">
    <property type="term" value="P:regulation of synaptic transmission, cholinergic"/>
    <property type="evidence" value="ECO:0007669"/>
    <property type="project" value="EnsemblMetazoa"/>
</dbReference>
<dbReference type="GO" id="GO:0048511">
    <property type="term" value="P:rhythmic process"/>
    <property type="evidence" value="ECO:0007669"/>
    <property type="project" value="UniProtKB-KW"/>
</dbReference>
<dbReference type="GO" id="GO:0030431">
    <property type="term" value="P:sleep"/>
    <property type="evidence" value="ECO:0007669"/>
    <property type="project" value="EnsemblMetazoa"/>
</dbReference>
<dbReference type="CDD" id="cd23595">
    <property type="entry name" value="TFP_LU_ECD_Qvr"/>
    <property type="match status" value="1"/>
</dbReference>
<dbReference type="InterPro" id="IPR031424">
    <property type="entry name" value="QVR-like"/>
</dbReference>
<dbReference type="InterPro" id="IPR050975">
    <property type="entry name" value="Sleep_regulator"/>
</dbReference>
<dbReference type="PANTHER" id="PTHR33562">
    <property type="entry name" value="ATILLA, ISOFORM B-RELATED-RELATED"/>
    <property type="match status" value="1"/>
</dbReference>
<dbReference type="PANTHER" id="PTHR33562:SF31">
    <property type="entry name" value="PROTEIN QUIVER"/>
    <property type="match status" value="1"/>
</dbReference>
<dbReference type="Pfam" id="PF17064">
    <property type="entry name" value="QVR"/>
    <property type="match status" value="1"/>
</dbReference>
<protein>
    <recommendedName>
        <fullName evidence="1">UPAR/Ly6 domain-containing protein qvr</fullName>
    </recommendedName>
    <alternativeName>
        <fullName evidence="1">Protein quiver</fullName>
    </alternativeName>
    <alternativeName>
        <fullName evidence="1">Protein sleepless</fullName>
    </alternativeName>
</protein>
<comment type="function">
    <text evidence="1">Bifunctional regulator of neuronal activity in the mushroom body, and possibly other regions of the brain, that acts as a signaling molecule required for homeostatic regulation of sleep under normal conditions and after sleep deprivation. Reduces neuronal excitability by enhancing Sh/shaker K(+) channel activity; possibly by stabilizing Sh/shaker to increase protein levels, accelerating its activation kinetics, slowing C-type inactivation and enhancing recovery from inactivation. Specifically affects the A-type K(+) current. Antagonizes nicotinic acetylcholine receptors (nAChRs) to reduce synaptic transmission, possibly by preventing their localization to the cell surface. Required for regulation of neuromuscular excitability and plasticity at neuromuscular junctions.</text>
</comment>
<comment type="subunit">
    <text evidence="1">Interacts (via loop 2 of the three-fingered Ly-6 domain) with Sh/shaker; this interaction may stabilize both components of the complex and may be required for targeting or retention of Sh/shaker to neural cell projections. Interacts (via loop 2 of the three-fingered Ly-6 domain) with nAChRalpha3 and potentially other nicotinic acetylcholine receptors; this interaction is required for antagonism of nicotinic acetylcholine receptors.</text>
</comment>
<comment type="subcellular location">
    <subcellularLocation>
        <location evidence="1">Cell membrane</location>
        <topology evidence="1">Lipid-anchor</topology>
        <topology evidence="1">GPI-anchor</topology>
        <orientation evidence="1">Extracellular side</orientation>
    </subcellularLocation>
    <subcellularLocation>
        <location evidence="1">Membrane raft</location>
        <topology evidence="1">Lipid-anchor</topology>
        <topology evidence="1">GPI-anchor</topology>
        <orientation evidence="1">Extracellular side</orientation>
    </subcellularLocation>
</comment>
<comment type="tissue specificity">
    <text evidence="1">Expressed in mushroom body (at protein level); overlaps with expression of Sh/shaker and nicotinic acetylcholine receptor (nAChR) components also involved in sleep regulation. Expressed in the adult brain and head. Enriched in the mushroom body, anterior optic tubercle, superior protocerebrum, antennal nerve and visual projection neuron fibers projecting into the lobula plate of the optic lobe.</text>
</comment>
<comment type="domain">
    <text evidence="1">Consists of a single Ly-6 domain, adopting a three finger fold stabilized by 5 disulfide bonds. The first loop contains a region essential for protein folding or that is required for localization to the cell surface. The second loop mediates protein-protein interactions.</text>
</comment>
<comment type="PTM">
    <text evidence="1">N-glycosylated probably on Asn-57.</text>
</comment>
<comment type="similarity">
    <text evidence="4">Belongs to the quiver family.</text>
</comment>
<comment type="sequence caution" evidence="4">
    <conflict type="erroneous gene model prediction">
        <sequence resource="EMBL-CDS" id="EDV35596"/>
    </conflict>
</comment>
<gene>
    <name evidence="1" type="primary">qvr</name>
    <name evidence="1" type="synonym">sss</name>
    <name type="ORF">GF12556</name>
</gene>
<name>QVR_DROAN</name>